<organism>
    <name type="scientific">Chlamydomonas reinhardtii</name>
    <name type="common">Chlamydomonas smithii</name>
    <dbReference type="NCBI Taxonomy" id="3055"/>
    <lineage>
        <taxon>Eukaryota</taxon>
        <taxon>Viridiplantae</taxon>
        <taxon>Chlorophyta</taxon>
        <taxon>core chlorophytes</taxon>
        <taxon>Chlorophyceae</taxon>
        <taxon>CS clade</taxon>
        <taxon>Chlamydomonadales</taxon>
        <taxon>Chlamydomonadaceae</taxon>
        <taxon>Chlamydomonas</taxon>
    </lineage>
</organism>
<comment type="subunit">
    <text>Part of the 50S ribosomal subunit.</text>
</comment>
<comment type="subcellular location">
    <subcellularLocation>
        <location>Plastid</location>
        <location>Chloroplast</location>
    </subcellularLocation>
</comment>
<comment type="similarity">
    <text evidence="1">Belongs to the universal ribosomal protein uL16 family.</text>
</comment>
<sequence>MLSPKRTKFRKPHRGHLRGKATRGNKIVFGDFALQAQEPCWITSRQIEAGRRVLTRYVRRGGKLWIRIFPDKAVTMRPAGTRMGSGKGAPDYWVAVVHPGKILYEMQGVSETIARQAMRIAAYKMPVKTKFLTKTV</sequence>
<feature type="chain" id="PRO_0000062273" description="Large ribosomal subunit protein uL16c">
    <location>
        <begin position="1"/>
        <end position="136"/>
    </location>
</feature>
<name>RK16_CHLRE</name>
<dbReference type="EMBL" id="M13931">
    <property type="protein sequence ID" value="AAA84151.1"/>
    <property type="molecule type" value="Genomic_DNA"/>
</dbReference>
<dbReference type="EMBL" id="X05202">
    <property type="protein sequence ID" value="CAA28835.1"/>
    <property type="molecule type" value="Genomic_DNA"/>
</dbReference>
<dbReference type="EMBL" id="FJ423446">
    <property type="protein sequence ID" value="ACJ50104.1"/>
    <property type="molecule type" value="Genomic_DNA"/>
</dbReference>
<dbReference type="EMBL" id="BK000554">
    <property type="protein sequence ID" value="DAA00917.1"/>
    <property type="molecule type" value="Genomic_DNA"/>
</dbReference>
<dbReference type="PIR" id="A25893">
    <property type="entry name" value="R5KM6R"/>
</dbReference>
<dbReference type="RefSeq" id="NP_958371.1">
    <property type="nucleotide sequence ID" value="NC_005353.1"/>
</dbReference>
<dbReference type="SMR" id="P05726"/>
<dbReference type="FunCoup" id="P05726">
    <property type="interactions" value="664"/>
</dbReference>
<dbReference type="STRING" id="3055.P05726"/>
<dbReference type="PaxDb" id="3055-DAA00917"/>
<dbReference type="GeneID" id="2717057"/>
<dbReference type="KEGG" id="cre:ChreCp014"/>
<dbReference type="eggNOG" id="KOG3422">
    <property type="taxonomic scope" value="Eukaryota"/>
</dbReference>
<dbReference type="HOGENOM" id="CLU_078858_2_1_1"/>
<dbReference type="InParanoid" id="P05726"/>
<dbReference type="CD-CODE" id="EA8B71D1">
    <property type="entry name" value="Pyrenoid"/>
</dbReference>
<dbReference type="Proteomes" id="UP000006906">
    <property type="component" value="Chloroplast"/>
</dbReference>
<dbReference type="GO" id="GO:0009507">
    <property type="term" value="C:chloroplast"/>
    <property type="evidence" value="ECO:0007669"/>
    <property type="project" value="UniProtKB-SubCell"/>
</dbReference>
<dbReference type="GO" id="GO:0005762">
    <property type="term" value="C:mitochondrial large ribosomal subunit"/>
    <property type="evidence" value="ECO:0000318"/>
    <property type="project" value="GO_Central"/>
</dbReference>
<dbReference type="GO" id="GO:0019843">
    <property type="term" value="F:rRNA binding"/>
    <property type="evidence" value="ECO:0000318"/>
    <property type="project" value="GO_Central"/>
</dbReference>
<dbReference type="GO" id="GO:0003735">
    <property type="term" value="F:structural constituent of ribosome"/>
    <property type="evidence" value="ECO:0000318"/>
    <property type="project" value="GO_Central"/>
</dbReference>
<dbReference type="GO" id="GO:0032543">
    <property type="term" value="P:mitochondrial translation"/>
    <property type="evidence" value="ECO:0000318"/>
    <property type="project" value="GO_Central"/>
</dbReference>
<dbReference type="CDD" id="cd01433">
    <property type="entry name" value="Ribosomal_L16_L10e"/>
    <property type="match status" value="1"/>
</dbReference>
<dbReference type="FunFam" id="3.90.1170.10:FF:000001">
    <property type="entry name" value="50S ribosomal protein L16"/>
    <property type="match status" value="1"/>
</dbReference>
<dbReference type="Gene3D" id="3.90.1170.10">
    <property type="entry name" value="Ribosomal protein L10e/L16"/>
    <property type="match status" value="1"/>
</dbReference>
<dbReference type="HAMAP" id="MF_01342">
    <property type="entry name" value="Ribosomal_uL16"/>
    <property type="match status" value="1"/>
</dbReference>
<dbReference type="InterPro" id="IPR047873">
    <property type="entry name" value="Ribosomal_uL16"/>
</dbReference>
<dbReference type="InterPro" id="IPR000114">
    <property type="entry name" value="Ribosomal_uL16_bact-type"/>
</dbReference>
<dbReference type="InterPro" id="IPR020798">
    <property type="entry name" value="Ribosomal_uL16_CS"/>
</dbReference>
<dbReference type="InterPro" id="IPR016180">
    <property type="entry name" value="Ribosomal_uL16_dom"/>
</dbReference>
<dbReference type="InterPro" id="IPR036920">
    <property type="entry name" value="Ribosomal_uL16_sf"/>
</dbReference>
<dbReference type="NCBIfam" id="TIGR01164">
    <property type="entry name" value="rplP_bact"/>
    <property type="match status" value="1"/>
</dbReference>
<dbReference type="PANTHER" id="PTHR12220">
    <property type="entry name" value="50S/60S RIBOSOMAL PROTEIN L16"/>
    <property type="match status" value="1"/>
</dbReference>
<dbReference type="PANTHER" id="PTHR12220:SF13">
    <property type="entry name" value="LARGE RIBOSOMAL SUBUNIT PROTEIN UL16M"/>
    <property type="match status" value="1"/>
</dbReference>
<dbReference type="Pfam" id="PF00252">
    <property type="entry name" value="Ribosomal_L16"/>
    <property type="match status" value="1"/>
</dbReference>
<dbReference type="PRINTS" id="PR00060">
    <property type="entry name" value="RIBOSOMALL16"/>
</dbReference>
<dbReference type="SUPFAM" id="SSF54686">
    <property type="entry name" value="Ribosomal protein L16p/L10e"/>
    <property type="match status" value="1"/>
</dbReference>
<dbReference type="PROSITE" id="PS00586">
    <property type="entry name" value="RIBOSOMAL_L16_1"/>
    <property type="match status" value="1"/>
</dbReference>
<dbReference type="PROSITE" id="PS00701">
    <property type="entry name" value="RIBOSOMAL_L16_2"/>
    <property type="match status" value="1"/>
</dbReference>
<protein>
    <recommendedName>
        <fullName evidence="1">Large ribosomal subunit protein uL16c</fullName>
    </recommendedName>
    <alternativeName>
        <fullName evidence="2">50S ribosomal protein L16, chloroplastic</fullName>
    </alternativeName>
</protein>
<proteinExistence type="inferred from homology"/>
<accession>P05726</accession>
<accession>B7U1F7</accession>
<keyword id="KW-0150">Chloroplast</keyword>
<keyword id="KW-0934">Plastid</keyword>
<keyword id="KW-1185">Reference proteome</keyword>
<keyword id="KW-0687">Ribonucleoprotein</keyword>
<keyword id="KW-0689">Ribosomal protein</keyword>
<geneLocation type="chloroplast"/>
<evidence type="ECO:0000255" key="1">
    <source>
        <dbReference type="HAMAP-Rule" id="MF_01342"/>
    </source>
</evidence>
<evidence type="ECO:0000305" key="2"/>
<gene>
    <name evidence="1" type="primary">rpl16</name>
</gene>
<reference key="1">
    <citation type="journal article" date="1986" name="Proc. Natl. Acad. Sci. U.S.A.">
        <title>Structure and function of a chloroplast DNA replication origin of Chlamydomonas reinhardtii.</title>
        <authorList>
            <person name="Wu M."/>
            <person name="Lou J.K."/>
            <person name="Chang D.Y."/>
            <person name="Chang C.H."/>
            <person name="Nie Z.Q."/>
        </authorList>
    </citation>
    <scope>NUCLEOTIDE SEQUENCE [GENOMIC DNA]</scope>
    <source>
        <strain>137c / CC-125</strain>
    </source>
</reference>
<reference key="2">
    <citation type="journal article" date="1987" name="Curr. Genet.">
        <title>Localization of a r-protein gene within the chloroplast DNA replication origin of Chlamydomonas.</title>
        <authorList>
            <person name="Lou J.K."/>
            <person name="Wu M."/>
            <person name="Chang C.H."/>
            <person name="Cuticchia A.J."/>
        </authorList>
    </citation>
    <scope>NUCLEOTIDE SEQUENCE [GENOMIC DNA]</scope>
</reference>
<reference key="3">
    <citation type="journal article" date="2009" name="BMC Evol. Biol.">
        <title>Nucleotide diversity of the Chlamydomonas reinhardtii plastid genome: addressing the mutational-hazard hypothesis.</title>
        <authorList>
            <person name="Smith D.R."/>
            <person name="Lee R.W."/>
        </authorList>
    </citation>
    <scope>NUCLEOTIDE SEQUENCE [LARGE SCALE GENOMIC DNA]</scope>
    <source>
        <strain>CC-503</strain>
    </source>
</reference>
<reference key="4">
    <citation type="journal article" date="2002" name="Plant Cell">
        <title>The Chlamydomonas reinhardtii plastid chromosome: islands of genes in a sea of repeats.</title>
        <authorList>
            <person name="Maul J.E."/>
            <person name="Lilly J.W."/>
            <person name="Cui L."/>
            <person name="dePamphilis C.W."/>
            <person name="Miller W."/>
            <person name="Harris E.H."/>
            <person name="Stern D.B."/>
        </authorList>
    </citation>
    <scope>IDENTIFICATION</scope>
    <scope>COMPLETE PLASTID GENOME</scope>
</reference>